<protein>
    <recommendedName>
        <fullName evidence="1">Large ribosomal subunit protein eL43</fullName>
    </recommendedName>
    <alternativeName>
        <fullName>60S ribosomal protein L37a</fullName>
    </alternativeName>
</protein>
<dbReference type="EMBL" id="AF127042">
    <property type="protein sequence ID" value="AAD28753.1"/>
    <property type="molecule type" value="mRNA"/>
</dbReference>
<dbReference type="SMR" id="Q9XHE4"/>
<dbReference type="STRING" id="3635.Q9XHE4"/>
<dbReference type="PaxDb" id="3635-Q9XHE4"/>
<dbReference type="Proteomes" id="UP000189702">
    <property type="component" value="Unplaced"/>
</dbReference>
<dbReference type="GO" id="GO:0022626">
    <property type="term" value="C:cytosolic ribosome"/>
    <property type="evidence" value="ECO:0000318"/>
    <property type="project" value="GO_Central"/>
</dbReference>
<dbReference type="GO" id="GO:1990904">
    <property type="term" value="C:ribonucleoprotein complex"/>
    <property type="evidence" value="ECO:0007669"/>
    <property type="project" value="UniProtKB-KW"/>
</dbReference>
<dbReference type="GO" id="GO:0003735">
    <property type="term" value="F:structural constituent of ribosome"/>
    <property type="evidence" value="ECO:0000318"/>
    <property type="project" value="GO_Central"/>
</dbReference>
<dbReference type="GO" id="GO:0008270">
    <property type="term" value="F:zinc ion binding"/>
    <property type="evidence" value="ECO:0007669"/>
    <property type="project" value="UniProtKB-KW"/>
</dbReference>
<dbReference type="GO" id="GO:0006412">
    <property type="term" value="P:translation"/>
    <property type="evidence" value="ECO:0007669"/>
    <property type="project" value="InterPro"/>
</dbReference>
<dbReference type="FunFam" id="2.20.25.30:FF:000002">
    <property type="entry name" value="60S ribosomal protein L37a"/>
    <property type="match status" value="1"/>
</dbReference>
<dbReference type="Gene3D" id="2.20.25.30">
    <property type="match status" value="1"/>
</dbReference>
<dbReference type="HAMAP" id="MF_00327">
    <property type="entry name" value="Ribosomal_eL43"/>
    <property type="match status" value="1"/>
</dbReference>
<dbReference type="InterPro" id="IPR011331">
    <property type="entry name" value="Ribosomal_eL37/eL43"/>
</dbReference>
<dbReference type="InterPro" id="IPR002674">
    <property type="entry name" value="Ribosomal_eL43"/>
</dbReference>
<dbReference type="InterPro" id="IPR011332">
    <property type="entry name" value="Ribosomal_zn-bd"/>
</dbReference>
<dbReference type="NCBIfam" id="TIGR00280">
    <property type="entry name" value="eL43_euk_arch"/>
    <property type="match status" value="1"/>
</dbReference>
<dbReference type="NCBIfam" id="NF003058">
    <property type="entry name" value="PRK03976.1"/>
    <property type="match status" value="1"/>
</dbReference>
<dbReference type="PANTHER" id="PTHR48149">
    <property type="entry name" value="60S RIBOSOMAL PROTEIN L37A-2"/>
    <property type="match status" value="1"/>
</dbReference>
<dbReference type="PANTHER" id="PTHR48149:SF1">
    <property type="entry name" value="LARGE RIBOSOMAL SUBUNIT PROTEIN EL43Y"/>
    <property type="match status" value="1"/>
</dbReference>
<dbReference type="Pfam" id="PF01780">
    <property type="entry name" value="Ribosomal_L37ae"/>
    <property type="match status" value="1"/>
</dbReference>
<dbReference type="SUPFAM" id="SSF57829">
    <property type="entry name" value="Zn-binding ribosomal proteins"/>
    <property type="match status" value="1"/>
</dbReference>
<sequence>MTKRTKKAGIVGKYGTRYGASLRKQIKKMEVSQHSKYFCEFCGKYAVKRKAVGIWGCKACGKVKAGGAYTLNTASAVTVRSTIRRLREQTES</sequence>
<name>RL37A_GOSHI</name>
<accession>Q9XHE4</accession>
<keyword id="KW-0479">Metal-binding</keyword>
<keyword id="KW-1185">Reference proteome</keyword>
<keyword id="KW-0687">Ribonucleoprotein</keyword>
<keyword id="KW-0689">Ribosomal protein</keyword>
<keyword id="KW-0862">Zinc</keyword>
<keyword id="KW-0863">Zinc-finger</keyword>
<organism>
    <name type="scientific">Gossypium hirsutum</name>
    <name type="common">Upland cotton</name>
    <name type="synonym">Gossypium mexicanum</name>
    <dbReference type="NCBI Taxonomy" id="3635"/>
    <lineage>
        <taxon>Eukaryota</taxon>
        <taxon>Viridiplantae</taxon>
        <taxon>Streptophyta</taxon>
        <taxon>Embryophyta</taxon>
        <taxon>Tracheophyta</taxon>
        <taxon>Spermatophyta</taxon>
        <taxon>Magnoliopsida</taxon>
        <taxon>eudicotyledons</taxon>
        <taxon>Gunneridae</taxon>
        <taxon>Pentapetalae</taxon>
        <taxon>rosids</taxon>
        <taxon>malvids</taxon>
        <taxon>Malvales</taxon>
        <taxon>Malvaceae</taxon>
        <taxon>Malvoideae</taxon>
        <taxon>Gossypium</taxon>
    </lineage>
</organism>
<reference key="1">
    <citation type="online journal article" date="1999" name="Plant Gene Register">
        <title>Homologue of ribosomal protein RL37a from upland cotton (Gossypium hirsutum L.).</title>
        <authorList>
            <person name="Kloth R.H."/>
            <person name="Turley R.B."/>
        </authorList>
        <locator>PGR99-088</locator>
    </citation>
    <scope>NUCLEOTIDE SEQUENCE [MRNA]</scope>
    <source>
        <strain>cv. Deltapine 62</strain>
    </source>
</reference>
<feature type="chain" id="PRO_0000139832" description="Large ribosomal subunit protein eL43">
    <location>
        <begin position="1"/>
        <end position="92"/>
    </location>
</feature>
<feature type="zinc finger region" description="C4-type">
    <location>
        <begin position="39"/>
        <end position="60"/>
    </location>
</feature>
<proteinExistence type="inferred from homology"/>
<evidence type="ECO:0000305" key="1"/>
<comment type="similarity">
    <text evidence="1">Belongs to the eukaryotic ribosomal protein eL43 family.</text>
</comment>
<gene>
    <name type="primary">RPL37A</name>
    <name type="synonym">RL37A</name>
</gene>